<reference key="1">
    <citation type="journal article" date="2005" name="Jpn. Agric. Res. Q.">
        <title>Genome sequence of Xanthomonas oryzae pv. oryzae suggests contribution of large numbers of effector genes and insertion sequences to its race diversity.</title>
        <authorList>
            <person name="Ochiai H."/>
            <person name="Inoue Y."/>
            <person name="Takeya M."/>
            <person name="Sasaki A."/>
            <person name="Kaku H."/>
        </authorList>
    </citation>
    <scope>NUCLEOTIDE SEQUENCE [LARGE SCALE GENOMIC DNA]</scope>
    <source>
        <strain>MAFF 311018</strain>
    </source>
</reference>
<sequence>MKPRIAYRPLHGILLLDKPAGLSSNNALQAARRLLRAEKGGHTGSLDPLATGLLPLCFGEATKIAGLLLGSAKAYDAEIVLGVTTDTDDADGEPLRERAVPDVSEADLQVALAAFIGRIQQQAPIYSALKQGGEPLYAKARRGEVIDAPVREVEVQAIEVLGYSAPRLTLRVTCGSGTYIRSLARDLGEVLGCGAHIASLRRLWVEPFRAPQMITLEGLATALEAGAEAQTVLLPIEAGLADFARIVLDAALAARFRMGQRLRDAAFPTGQVAVFGPDGSPSGLGLVDADGRLSPQRLFNGLNEISVC</sequence>
<keyword id="KW-0413">Isomerase</keyword>
<keyword id="KW-0819">tRNA processing</keyword>
<name>TRUB_XANOM</name>
<protein>
    <recommendedName>
        <fullName evidence="1">tRNA pseudouridine synthase B</fullName>
        <ecNumber evidence="1">5.4.99.25</ecNumber>
    </recommendedName>
    <alternativeName>
        <fullName evidence="1">tRNA pseudouridine(55) synthase</fullName>
        <shortName evidence="1">Psi55 synthase</shortName>
    </alternativeName>
    <alternativeName>
        <fullName evidence="1">tRNA pseudouridylate synthase</fullName>
    </alternativeName>
    <alternativeName>
        <fullName evidence="1">tRNA-uridine isomerase</fullName>
    </alternativeName>
</protein>
<proteinExistence type="inferred from homology"/>
<accession>Q2P0X3</accession>
<comment type="function">
    <text evidence="1">Responsible for synthesis of pseudouridine from uracil-55 in the psi GC loop of transfer RNAs.</text>
</comment>
<comment type="catalytic activity">
    <reaction evidence="1">
        <text>uridine(55) in tRNA = pseudouridine(55) in tRNA</text>
        <dbReference type="Rhea" id="RHEA:42532"/>
        <dbReference type="Rhea" id="RHEA-COMP:10101"/>
        <dbReference type="Rhea" id="RHEA-COMP:10102"/>
        <dbReference type="ChEBI" id="CHEBI:65314"/>
        <dbReference type="ChEBI" id="CHEBI:65315"/>
        <dbReference type="EC" id="5.4.99.25"/>
    </reaction>
</comment>
<comment type="similarity">
    <text evidence="1">Belongs to the pseudouridine synthase TruB family. Type 1 subfamily.</text>
</comment>
<organism>
    <name type="scientific">Xanthomonas oryzae pv. oryzae (strain MAFF 311018)</name>
    <dbReference type="NCBI Taxonomy" id="342109"/>
    <lineage>
        <taxon>Bacteria</taxon>
        <taxon>Pseudomonadati</taxon>
        <taxon>Pseudomonadota</taxon>
        <taxon>Gammaproteobacteria</taxon>
        <taxon>Lysobacterales</taxon>
        <taxon>Lysobacteraceae</taxon>
        <taxon>Xanthomonas</taxon>
    </lineage>
</organism>
<evidence type="ECO:0000255" key="1">
    <source>
        <dbReference type="HAMAP-Rule" id="MF_01080"/>
    </source>
</evidence>
<feature type="chain" id="PRO_0000229395" description="tRNA pseudouridine synthase B">
    <location>
        <begin position="1"/>
        <end position="308"/>
    </location>
</feature>
<feature type="active site" description="Nucleophile" evidence="1">
    <location>
        <position position="47"/>
    </location>
</feature>
<gene>
    <name evidence="1" type="primary">truB</name>
    <name type="ordered locus">XOO3049</name>
</gene>
<dbReference type="EC" id="5.4.99.25" evidence="1"/>
<dbReference type="EMBL" id="AP008229">
    <property type="protein sequence ID" value="BAE69804.1"/>
    <property type="molecule type" value="Genomic_DNA"/>
</dbReference>
<dbReference type="RefSeq" id="WP_011259734.1">
    <property type="nucleotide sequence ID" value="NC_007705.1"/>
</dbReference>
<dbReference type="SMR" id="Q2P0X3"/>
<dbReference type="KEGG" id="xom:XOO3049"/>
<dbReference type="HOGENOM" id="CLU_032087_0_3_6"/>
<dbReference type="GO" id="GO:0003723">
    <property type="term" value="F:RNA binding"/>
    <property type="evidence" value="ECO:0007669"/>
    <property type="project" value="InterPro"/>
</dbReference>
<dbReference type="GO" id="GO:0160148">
    <property type="term" value="F:tRNA pseudouridine(55) synthase activity"/>
    <property type="evidence" value="ECO:0007669"/>
    <property type="project" value="UniProtKB-EC"/>
</dbReference>
<dbReference type="GO" id="GO:1990481">
    <property type="term" value="P:mRNA pseudouridine synthesis"/>
    <property type="evidence" value="ECO:0007669"/>
    <property type="project" value="TreeGrafter"/>
</dbReference>
<dbReference type="GO" id="GO:0031119">
    <property type="term" value="P:tRNA pseudouridine synthesis"/>
    <property type="evidence" value="ECO:0007669"/>
    <property type="project" value="UniProtKB-UniRule"/>
</dbReference>
<dbReference type="CDD" id="cd02573">
    <property type="entry name" value="PseudoU_synth_EcTruB"/>
    <property type="match status" value="1"/>
</dbReference>
<dbReference type="CDD" id="cd21152">
    <property type="entry name" value="PUA_TruB_bacterial"/>
    <property type="match status" value="1"/>
</dbReference>
<dbReference type="Gene3D" id="3.30.2350.10">
    <property type="entry name" value="Pseudouridine synthase"/>
    <property type="match status" value="1"/>
</dbReference>
<dbReference type="Gene3D" id="2.30.130.10">
    <property type="entry name" value="PUA domain"/>
    <property type="match status" value="1"/>
</dbReference>
<dbReference type="HAMAP" id="MF_01080">
    <property type="entry name" value="TruB_bact"/>
    <property type="match status" value="1"/>
</dbReference>
<dbReference type="InterPro" id="IPR020103">
    <property type="entry name" value="PsdUridine_synth_cat_dom_sf"/>
</dbReference>
<dbReference type="InterPro" id="IPR002501">
    <property type="entry name" value="PsdUridine_synth_N"/>
</dbReference>
<dbReference type="InterPro" id="IPR015947">
    <property type="entry name" value="PUA-like_sf"/>
</dbReference>
<dbReference type="InterPro" id="IPR036974">
    <property type="entry name" value="PUA_sf"/>
</dbReference>
<dbReference type="InterPro" id="IPR014780">
    <property type="entry name" value="tRNA_psdUridine_synth_TruB"/>
</dbReference>
<dbReference type="InterPro" id="IPR015240">
    <property type="entry name" value="tRNA_sdUridine_synth_fam1_C"/>
</dbReference>
<dbReference type="InterPro" id="IPR032819">
    <property type="entry name" value="TruB_C"/>
</dbReference>
<dbReference type="NCBIfam" id="TIGR00431">
    <property type="entry name" value="TruB"/>
    <property type="match status" value="1"/>
</dbReference>
<dbReference type="PANTHER" id="PTHR13767:SF2">
    <property type="entry name" value="PSEUDOURIDYLATE SYNTHASE TRUB1"/>
    <property type="match status" value="1"/>
</dbReference>
<dbReference type="PANTHER" id="PTHR13767">
    <property type="entry name" value="TRNA-PSEUDOURIDINE SYNTHASE"/>
    <property type="match status" value="1"/>
</dbReference>
<dbReference type="Pfam" id="PF09157">
    <property type="entry name" value="TruB-C_2"/>
    <property type="match status" value="1"/>
</dbReference>
<dbReference type="Pfam" id="PF16198">
    <property type="entry name" value="TruB_C_2"/>
    <property type="match status" value="1"/>
</dbReference>
<dbReference type="Pfam" id="PF01509">
    <property type="entry name" value="TruB_N"/>
    <property type="match status" value="1"/>
</dbReference>
<dbReference type="SUPFAM" id="SSF55120">
    <property type="entry name" value="Pseudouridine synthase"/>
    <property type="match status" value="1"/>
</dbReference>
<dbReference type="SUPFAM" id="SSF88697">
    <property type="entry name" value="PUA domain-like"/>
    <property type="match status" value="1"/>
</dbReference>